<feature type="chain" id="PRO_1000115289" description="RNA pyrophosphohydrolase">
    <location>
        <begin position="1"/>
        <end position="159"/>
    </location>
</feature>
<feature type="domain" description="Nudix hydrolase" evidence="1">
    <location>
        <begin position="6"/>
        <end position="149"/>
    </location>
</feature>
<feature type="short sequence motif" description="Nudix box">
    <location>
        <begin position="38"/>
        <end position="59"/>
    </location>
</feature>
<comment type="function">
    <text evidence="1">Accelerates the degradation of transcripts by removing pyrophosphate from the 5'-end of triphosphorylated RNA, leading to a more labile monophosphorylated state that can stimulate subsequent ribonuclease cleavage.</text>
</comment>
<comment type="cofactor">
    <cofactor evidence="1">
        <name>a divalent metal cation</name>
        <dbReference type="ChEBI" id="CHEBI:60240"/>
    </cofactor>
</comment>
<comment type="similarity">
    <text evidence="1">Belongs to the Nudix hydrolase family. RppH subfamily.</text>
</comment>
<accession>B1J2P0</accession>
<dbReference type="EC" id="3.6.1.-" evidence="1"/>
<dbReference type="EMBL" id="CP000949">
    <property type="protein sequence ID" value="ACA70825.1"/>
    <property type="molecule type" value="Genomic_DNA"/>
</dbReference>
<dbReference type="SMR" id="B1J2P0"/>
<dbReference type="STRING" id="390235.PputW619_0319"/>
<dbReference type="KEGG" id="ppw:PputW619_0319"/>
<dbReference type="eggNOG" id="COG0494">
    <property type="taxonomic scope" value="Bacteria"/>
</dbReference>
<dbReference type="HOGENOM" id="CLU_087195_3_1_6"/>
<dbReference type="OrthoDB" id="9816040at2"/>
<dbReference type="GO" id="GO:0005737">
    <property type="term" value="C:cytoplasm"/>
    <property type="evidence" value="ECO:0007669"/>
    <property type="project" value="TreeGrafter"/>
</dbReference>
<dbReference type="GO" id="GO:0034353">
    <property type="term" value="F:mRNA 5'-diphosphatase activity"/>
    <property type="evidence" value="ECO:0007669"/>
    <property type="project" value="TreeGrafter"/>
</dbReference>
<dbReference type="GO" id="GO:0006402">
    <property type="term" value="P:mRNA catabolic process"/>
    <property type="evidence" value="ECO:0007669"/>
    <property type="project" value="TreeGrafter"/>
</dbReference>
<dbReference type="CDD" id="cd03671">
    <property type="entry name" value="NUDIX_Ap4A_hydrolase_plant_like"/>
    <property type="match status" value="1"/>
</dbReference>
<dbReference type="FunFam" id="3.90.79.10:FF:000001">
    <property type="entry name" value="RNA pyrophosphohydrolase"/>
    <property type="match status" value="1"/>
</dbReference>
<dbReference type="Gene3D" id="3.90.79.10">
    <property type="entry name" value="Nucleoside Triphosphate Pyrophosphohydrolase"/>
    <property type="match status" value="1"/>
</dbReference>
<dbReference type="HAMAP" id="MF_00298">
    <property type="entry name" value="Nudix_RppH"/>
    <property type="match status" value="1"/>
</dbReference>
<dbReference type="InterPro" id="IPR020476">
    <property type="entry name" value="Nudix_hydrolase"/>
</dbReference>
<dbReference type="InterPro" id="IPR015797">
    <property type="entry name" value="NUDIX_hydrolase-like_dom_sf"/>
</dbReference>
<dbReference type="InterPro" id="IPR020084">
    <property type="entry name" value="NUDIX_hydrolase_CS"/>
</dbReference>
<dbReference type="InterPro" id="IPR000086">
    <property type="entry name" value="NUDIX_hydrolase_dom"/>
</dbReference>
<dbReference type="InterPro" id="IPR022927">
    <property type="entry name" value="RppH"/>
</dbReference>
<dbReference type="NCBIfam" id="NF001934">
    <property type="entry name" value="PRK00714.1-1"/>
    <property type="match status" value="1"/>
</dbReference>
<dbReference type="NCBIfam" id="NF001937">
    <property type="entry name" value="PRK00714.1-4"/>
    <property type="match status" value="1"/>
</dbReference>
<dbReference type="NCBIfam" id="NF001938">
    <property type="entry name" value="PRK00714.1-5"/>
    <property type="match status" value="1"/>
</dbReference>
<dbReference type="PANTHER" id="PTHR23114">
    <property type="entry name" value="M7GPPPN-MRNA HYDROLASE"/>
    <property type="match status" value="1"/>
</dbReference>
<dbReference type="PANTHER" id="PTHR23114:SF17">
    <property type="entry name" value="M7GPPPN-MRNA HYDROLASE"/>
    <property type="match status" value="1"/>
</dbReference>
<dbReference type="Pfam" id="PF00293">
    <property type="entry name" value="NUDIX"/>
    <property type="match status" value="1"/>
</dbReference>
<dbReference type="PRINTS" id="PR00502">
    <property type="entry name" value="NUDIXFAMILY"/>
</dbReference>
<dbReference type="SUPFAM" id="SSF55811">
    <property type="entry name" value="Nudix"/>
    <property type="match status" value="1"/>
</dbReference>
<dbReference type="PROSITE" id="PS51462">
    <property type="entry name" value="NUDIX"/>
    <property type="match status" value="1"/>
</dbReference>
<dbReference type="PROSITE" id="PS00893">
    <property type="entry name" value="NUDIX_BOX"/>
    <property type="match status" value="1"/>
</dbReference>
<gene>
    <name evidence="1" type="primary">rppH</name>
    <name evidence="1" type="synonym">nudH</name>
    <name type="ordered locus">PputW619_0319</name>
</gene>
<keyword id="KW-0378">Hydrolase</keyword>
<sequence length="159" mass="18838">MIDPDGFRPNVGIILTNDAGQVLWARRINQDAWQFPQGGINPDETPEDALYRELNEEVGLERDDVEILACTRGWLRYRLPQRLVRTHSQPLCIGQKQKWFLLRLVSNEQRVRMDLTGKPEFDGWRWVSYWYPLGQVVTFKREVYRRALKELAPRLLTRD</sequence>
<organism>
    <name type="scientific">Pseudomonas putida (strain W619)</name>
    <dbReference type="NCBI Taxonomy" id="390235"/>
    <lineage>
        <taxon>Bacteria</taxon>
        <taxon>Pseudomonadati</taxon>
        <taxon>Pseudomonadota</taxon>
        <taxon>Gammaproteobacteria</taxon>
        <taxon>Pseudomonadales</taxon>
        <taxon>Pseudomonadaceae</taxon>
        <taxon>Pseudomonas</taxon>
    </lineage>
</organism>
<name>RPPH_PSEPW</name>
<evidence type="ECO:0000255" key="1">
    <source>
        <dbReference type="HAMAP-Rule" id="MF_00298"/>
    </source>
</evidence>
<proteinExistence type="inferred from homology"/>
<protein>
    <recommendedName>
        <fullName evidence="1">RNA pyrophosphohydrolase</fullName>
        <ecNumber evidence="1">3.6.1.-</ecNumber>
    </recommendedName>
    <alternativeName>
        <fullName evidence="1">(Di)nucleoside polyphosphate hydrolase</fullName>
    </alternativeName>
</protein>
<reference key="1">
    <citation type="submission" date="2008-02" db="EMBL/GenBank/DDBJ databases">
        <title>Complete sequence of Pseudomonas putida W619.</title>
        <authorList>
            <person name="Copeland A."/>
            <person name="Lucas S."/>
            <person name="Lapidus A."/>
            <person name="Barry K."/>
            <person name="Detter J.C."/>
            <person name="Glavina del Rio T."/>
            <person name="Dalin E."/>
            <person name="Tice H."/>
            <person name="Pitluck S."/>
            <person name="Chain P."/>
            <person name="Malfatti S."/>
            <person name="Shin M."/>
            <person name="Vergez L."/>
            <person name="Schmutz J."/>
            <person name="Larimer F."/>
            <person name="Land M."/>
            <person name="Hauser L."/>
            <person name="Kyrpides N."/>
            <person name="Kim E."/>
            <person name="Taghavi S."/>
            <person name="Vangronsveld D."/>
            <person name="van der Lelie D."/>
            <person name="Richardson P."/>
        </authorList>
    </citation>
    <scope>NUCLEOTIDE SEQUENCE [LARGE SCALE GENOMIC DNA]</scope>
    <source>
        <strain>W619</strain>
    </source>
</reference>